<sequence length="180" mass="19806">MSIEVSNESGMDISEPELISVARFVIARMDVHPAAELSMVLVDSATMADLHVRWMDLPGPTDVMSFPMDELEPGGRPDSPEPGPSMLGDIVLCPSFAADQADKAGHSLAHELALLTVHGVLHLLGYDHAEPEEEKEMFGLQNSLLEEWYEDLRRIDREAALAERDQKLLGKTGFVDGVDR</sequence>
<accession>C1A1F6</accession>
<protein>
    <recommendedName>
        <fullName evidence="1">Endoribonuclease YbeY</fullName>
        <ecNumber evidence="1">3.1.-.-</ecNumber>
    </recommendedName>
</protein>
<reference key="1">
    <citation type="submission" date="2005-03" db="EMBL/GenBank/DDBJ databases">
        <title>Comparison of the complete genome sequences of Rhodococcus erythropolis PR4 and Rhodococcus opacus B4.</title>
        <authorList>
            <person name="Takarada H."/>
            <person name="Sekine M."/>
            <person name="Hosoyama A."/>
            <person name="Yamada R."/>
            <person name="Fujisawa T."/>
            <person name="Omata S."/>
            <person name="Shimizu A."/>
            <person name="Tsukatani N."/>
            <person name="Tanikawa S."/>
            <person name="Fujita N."/>
            <person name="Harayama S."/>
        </authorList>
    </citation>
    <scope>NUCLEOTIDE SEQUENCE [LARGE SCALE GENOMIC DNA]</scope>
    <source>
        <strain>PR4 / NBRC 100887</strain>
    </source>
</reference>
<proteinExistence type="inferred from homology"/>
<comment type="function">
    <text evidence="1">Single strand-specific metallo-endoribonuclease involved in late-stage 70S ribosome quality control and in maturation of the 3' terminus of the 16S rRNA.</text>
</comment>
<comment type="cofactor">
    <cofactor evidence="1">
        <name>Zn(2+)</name>
        <dbReference type="ChEBI" id="CHEBI:29105"/>
    </cofactor>
    <text evidence="1">Binds 1 zinc ion.</text>
</comment>
<comment type="subcellular location">
    <subcellularLocation>
        <location evidence="1">Cytoplasm</location>
    </subcellularLocation>
</comment>
<comment type="similarity">
    <text evidence="1">Belongs to the endoribonuclease YbeY family.</text>
</comment>
<organism>
    <name type="scientific">Rhodococcus erythropolis (strain PR4 / NBRC 100887)</name>
    <dbReference type="NCBI Taxonomy" id="234621"/>
    <lineage>
        <taxon>Bacteria</taxon>
        <taxon>Bacillati</taxon>
        <taxon>Actinomycetota</taxon>
        <taxon>Actinomycetes</taxon>
        <taxon>Mycobacteriales</taxon>
        <taxon>Nocardiaceae</taxon>
        <taxon>Rhodococcus</taxon>
        <taxon>Rhodococcus erythropolis group</taxon>
    </lineage>
</organism>
<feature type="chain" id="PRO_1000201743" description="Endoribonuclease YbeY">
    <location>
        <begin position="1"/>
        <end position="180"/>
    </location>
</feature>
<feature type="binding site" evidence="1">
    <location>
        <position position="118"/>
    </location>
    <ligand>
        <name>Zn(2+)</name>
        <dbReference type="ChEBI" id="CHEBI:29105"/>
        <note>catalytic</note>
    </ligand>
</feature>
<feature type="binding site" evidence="1">
    <location>
        <position position="122"/>
    </location>
    <ligand>
        <name>Zn(2+)</name>
        <dbReference type="ChEBI" id="CHEBI:29105"/>
        <note>catalytic</note>
    </ligand>
</feature>
<feature type="binding site" evidence="1">
    <location>
        <position position="128"/>
    </location>
    <ligand>
        <name>Zn(2+)</name>
        <dbReference type="ChEBI" id="CHEBI:29105"/>
        <note>catalytic</note>
    </ligand>
</feature>
<gene>
    <name evidence="1" type="primary">ybeY</name>
    <name type="ordered locus">RER_37330</name>
</gene>
<dbReference type="EC" id="3.1.-.-" evidence="1"/>
<dbReference type="EMBL" id="AP008957">
    <property type="protein sequence ID" value="BAH34441.1"/>
    <property type="molecule type" value="Genomic_DNA"/>
</dbReference>
<dbReference type="RefSeq" id="WP_003944525.1">
    <property type="nucleotide sequence ID" value="NC_012490.1"/>
</dbReference>
<dbReference type="SMR" id="C1A1F6"/>
<dbReference type="GeneID" id="93805047"/>
<dbReference type="KEGG" id="rer:RER_37330"/>
<dbReference type="eggNOG" id="COG0319">
    <property type="taxonomic scope" value="Bacteria"/>
</dbReference>
<dbReference type="HOGENOM" id="CLU_106710_3_2_11"/>
<dbReference type="Proteomes" id="UP000002204">
    <property type="component" value="Chromosome"/>
</dbReference>
<dbReference type="GO" id="GO:0005737">
    <property type="term" value="C:cytoplasm"/>
    <property type="evidence" value="ECO:0007669"/>
    <property type="project" value="UniProtKB-SubCell"/>
</dbReference>
<dbReference type="GO" id="GO:0004222">
    <property type="term" value="F:metalloendopeptidase activity"/>
    <property type="evidence" value="ECO:0007669"/>
    <property type="project" value="InterPro"/>
</dbReference>
<dbReference type="GO" id="GO:0004521">
    <property type="term" value="F:RNA endonuclease activity"/>
    <property type="evidence" value="ECO:0007669"/>
    <property type="project" value="UniProtKB-UniRule"/>
</dbReference>
<dbReference type="GO" id="GO:0008270">
    <property type="term" value="F:zinc ion binding"/>
    <property type="evidence" value="ECO:0007669"/>
    <property type="project" value="UniProtKB-UniRule"/>
</dbReference>
<dbReference type="GO" id="GO:0006364">
    <property type="term" value="P:rRNA processing"/>
    <property type="evidence" value="ECO:0007669"/>
    <property type="project" value="UniProtKB-UniRule"/>
</dbReference>
<dbReference type="Gene3D" id="3.40.390.30">
    <property type="entry name" value="Metalloproteases ('zincins'), catalytic domain"/>
    <property type="match status" value="1"/>
</dbReference>
<dbReference type="HAMAP" id="MF_00009">
    <property type="entry name" value="Endoribonucl_YbeY"/>
    <property type="match status" value="1"/>
</dbReference>
<dbReference type="InterPro" id="IPR023091">
    <property type="entry name" value="MetalPrtase_cat_dom_sf_prd"/>
</dbReference>
<dbReference type="InterPro" id="IPR002036">
    <property type="entry name" value="YbeY"/>
</dbReference>
<dbReference type="InterPro" id="IPR020549">
    <property type="entry name" value="YbeY_CS"/>
</dbReference>
<dbReference type="NCBIfam" id="TIGR00043">
    <property type="entry name" value="rRNA maturation RNase YbeY"/>
    <property type="match status" value="1"/>
</dbReference>
<dbReference type="PANTHER" id="PTHR46986">
    <property type="entry name" value="ENDORIBONUCLEASE YBEY, CHLOROPLASTIC"/>
    <property type="match status" value="1"/>
</dbReference>
<dbReference type="PANTHER" id="PTHR46986:SF1">
    <property type="entry name" value="ENDORIBONUCLEASE YBEY, CHLOROPLASTIC"/>
    <property type="match status" value="1"/>
</dbReference>
<dbReference type="Pfam" id="PF02130">
    <property type="entry name" value="YbeY"/>
    <property type="match status" value="1"/>
</dbReference>
<dbReference type="SUPFAM" id="SSF55486">
    <property type="entry name" value="Metalloproteases ('zincins'), catalytic domain"/>
    <property type="match status" value="1"/>
</dbReference>
<dbReference type="PROSITE" id="PS01306">
    <property type="entry name" value="UPF0054"/>
    <property type="match status" value="1"/>
</dbReference>
<keyword id="KW-0963">Cytoplasm</keyword>
<keyword id="KW-0255">Endonuclease</keyword>
<keyword id="KW-0378">Hydrolase</keyword>
<keyword id="KW-0479">Metal-binding</keyword>
<keyword id="KW-0540">Nuclease</keyword>
<keyword id="KW-0690">Ribosome biogenesis</keyword>
<keyword id="KW-0698">rRNA processing</keyword>
<keyword id="KW-0862">Zinc</keyword>
<evidence type="ECO:0000255" key="1">
    <source>
        <dbReference type="HAMAP-Rule" id="MF_00009"/>
    </source>
</evidence>
<name>YBEY_RHOE4</name>